<reference key="1">
    <citation type="journal article" date="1988" name="Cell">
        <title>Isolation of a putative phospholipase C gene of Drosophila, norpA, and its role in phototransduction.</title>
        <authorList>
            <person name="Bloomquist B.T."/>
            <person name="Shortridge R.D."/>
            <person name="Schneuwly S."/>
            <person name="Perdew M.H."/>
            <person name="Montell C."/>
            <person name="Steller H."/>
            <person name="Rubin G."/>
            <person name="Pak W.L."/>
        </authorList>
    </citation>
    <scope>NUCLEOTIDE SEQUENCE [MRNA] (ISOFORM A)</scope>
    <scope>FUNCTION</scope>
    <scope>TISSUE SPECIFICITY</scope>
    <scope>DISRUPTION PHENOTYPE</scope>
</reference>
<reference key="2">
    <citation type="journal article" date="2000" name="Science">
        <title>The genome sequence of Drosophila melanogaster.</title>
        <authorList>
            <person name="Adams M.D."/>
            <person name="Celniker S.E."/>
            <person name="Holt R.A."/>
            <person name="Evans C.A."/>
            <person name="Gocayne J.D."/>
            <person name="Amanatides P.G."/>
            <person name="Scherer S.E."/>
            <person name="Li P.W."/>
            <person name="Hoskins R.A."/>
            <person name="Galle R.F."/>
            <person name="George R.A."/>
            <person name="Lewis S.E."/>
            <person name="Richards S."/>
            <person name="Ashburner M."/>
            <person name="Henderson S.N."/>
            <person name="Sutton G.G."/>
            <person name="Wortman J.R."/>
            <person name="Yandell M.D."/>
            <person name="Zhang Q."/>
            <person name="Chen L.X."/>
            <person name="Brandon R.C."/>
            <person name="Rogers Y.-H.C."/>
            <person name="Blazej R.G."/>
            <person name="Champe M."/>
            <person name="Pfeiffer B.D."/>
            <person name="Wan K.H."/>
            <person name="Doyle C."/>
            <person name="Baxter E.G."/>
            <person name="Helt G."/>
            <person name="Nelson C.R."/>
            <person name="Miklos G.L.G."/>
            <person name="Abril J.F."/>
            <person name="Agbayani A."/>
            <person name="An H.-J."/>
            <person name="Andrews-Pfannkoch C."/>
            <person name="Baldwin D."/>
            <person name="Ballew R.M."/>
            <person name="Basu A."/>
            <person name="Baxendale J."/>
            <person name="Bayraktaroglu L."/>
            <person name="Beasley E.M."/>
            <person name="Beeson K.Y."/>
            <person name="Benos P.V."/>
            <person name="Berman B.P."/>
            <person name="Bhandari D."/>
            <person name="Bolshakov S."/>
            <person name="Borkova D."/>
            <person name="Botchan M.R."/>
            <person name="Bouck J."/>
            <person name="Brokstein P."/>
            <person name="Brottier P."/>
            <person name="Burtis K.C."/>
            <person name="Busam D.A."/>
            <person name="Butler H."/>
            <person name="Cadieu E."/>
            <person name="Center A."/>
            <person name="Chandra I."/>
            <person name="Cherry J.M."/>
            <person name="Cawley S."/>
            <person name="Dahlke C."/>
            <person name="Davenport L.B."/>
            <person name="Davies P."/>
            <person name="de Pablos B."/>
            <person name="Delcher A."/>
            <person name="Deng Z."/>
            <person name="Mays A.D."/>
            <person name="Dew I."/>
            <person name="Dietz S.M."/>
            <person name="Dodson K."/>
            <person name="Doup L.E."/>
            <person name="Downes M."/>
            <person name="Dugan-Rocha S."/>
            <person name="Dunkov B.C."/>
            <person name="Dunn P."/>
            <person name="Durbin K.J."/>
            <person name="Evangelista C.C."/>
            <person name="Ferraz C."/>
            <person name="Ferriera S."/>
            <person name="Fleischmann W."/>
            <person name="Fosler C."/>
            <person name="Gabrielian A.E."/>
            <person name="Garg N.S."/>
            <person name="Gelbart W.M."/>
            <person name="Glasser K."/>
            <person name="Glodek A."/>
            <person name="Gong F."/>
            <person name="Gorrell J.H."/>
            <person name="Gu Z."/>
            <person name="Guan P."/>
            <person name="Harris M."/>
            <person name="Harris N.L."/>
            <person name="Harvey D.A."/>
            <person name="Heiman T.J."/>
            <person name="Hernandez J.R."/>
            <person name="Houck J."/>
            <person name="Hostin D."/>
            <person name="Houston K.A."/>
            <person name="Howland T.J."/>
            <person name="Wei M.-H."/>
            <person name="Ibegwam C."/>
            <person name="Jalali M."/>
            <person name="Kalush F."/>
            <person name="Karpen G.H."/>
            <person name="Ke Z."/>
            <person name="Kennison J.A."/>
            <person name="Ketchum K.A."/>
            <person name="Kimmel B.E."/>
            <person name="Kodira C.D."/>
            <person name="Kraft C.L."/>
            <person name="Kravitz S."/>
            <person name="Kulp D."/>
            <person name="Lai Z."/>
            <person name="Lasko P."/>
            <person name="Lei Y."/>
            <person name="Levitsky A.A."/>
            <person name="Li J.H."/>
            <person name="Li Z."/>
            <person name="Liang Y."/>
            <person name="Lin X."/>
            <person name="Liu X."/>
            <person name="Mattei B."/>
            <person name="McIntosh T.C."/>
            <person name="McLeod M.P."/>
            <person name="McPherson D."/>
            <person name="Merkulov G."/>
            <person name="Milshina N.V."/>
            <person name="Mobarry C."/>
            <person name="Morris J."/>
            <person name="Moshrefi A."/>
            <person name="Mount S.M."/>
            <person name="Moy M."/>
            <person name="Murphy B."/>
            <person name="Murphy L."/>
            <person name="Muzny D.M."/>
            <person name="Nelson D.L."/>
            <person name="Nelson D.R."/>
            <person name="Nelson K.A."/>
            <person name="Nixon K."/>
            <person name="Nusskern D.R."/>
            <person name="Pacleb J.M."/>
            <person name="Palazzolo M."/>
            <person name="Pittman G.S."/>
            <person name="Pan S."/>
            <person name="Pollard J."/>
            <person name="Puri V."/>
            <person name="Reese M.G."/>
            <person name="Reinert K."/>
            <person name="Remington K."/>
            <person name="Saunders R.D.C."/>
            <person name="Scheeler F."/>
            <person name="Shen H."/>
            <person name="Shue B.C."/>
            <person name="Siden-Kiamos I."/>
            <person name="Simpson M."/>
            <person name="Skupski M.P."/>
            <person name="Smith T.J."/>
            <person name="Spier E."/>
            <person name="Spradling A.C."/>
            <person name="Stapleton M."/>
            <person name="Strong R."/>
            <person name="Sun E."/>
            <person name="Svirskas R."/>
            <person name="Tector C."/>
            <person name="Turner R."/>
            <person name="Venter E."/>
            <person name="Wang A.H."/>
            <person name="Wang X."/>
            <person name="Wang Z.-Y."/>
            <person name="Wassarman D.A."/>
            <person name="Weinstock G.M."/>
            <person name="Weissenbach J."/>
            <person name="Williams S.M."/>
            <person name="Woodage T."/>
            <person name="Worley K.C."/>
            <person name="Wu D."/>
            <person name="Yang S."/>
            <person name="Yao Q.A."/>
            <person name="Ye J."/>
            <person name="Yeh R.-F."/>
            <person name="Zaveri J.S."/>
            <person name="Zhan M."/>
            <person name="Zhang G."/>
            <person name="Zhao Q."/>
            <person name="Zheng L."/>
            <person name="Zheng X.H."/>
            <person name="Zhong F.N."/>
            <person name="Zhong W."/>
            <person name="Zhou X."/>
            <person name="Zhu S.C."/>
            <person name="Zhu X."/>
            <person name="Smith H.O."/>
            <person name="Gibbs R.A."/>
            <person name="Myers E.W."/>
            <person name="Rubin G.M."/>
            <person name="Venter J.C."/>
        </authorList>
    </citation>
    <scope>NUCLEOTIDE SEQUENCE [LARGE SCALE GENOMIC DNA]</scope>
    <source>
        <strain>Berkeley</strain>
    </source>
</reference>
<reference key="3">
    <citation type="journal article" date="2002" name="Genome Biol.">
        <title>Annotation of the Drosophila melanogaster euchromatic genome: a systematic review.</title>
        <authorList>
            <person name="Misra S."/>
            <person name="Crosby M.A."/>
            <person name="Mungall C.J."/>
            <person name="Matthews B.B."/>
            <person name="Campbell K.S."/>
            <person name="Hradecky P."/>
            <person name="Huang Y."/>
            <person name="Kaminker J.S."/>
            <person name="Millburn G.H."/>
            <person name="Prochnik S.E."/>
            <person name="Smith C.D."/>
            <person name="Tupy J.L."/>
            <person name="Whitfield E.J."/>
            <person name="Bayraktaroglu L."/>
            <person name="Berman B.P."/>
            <person name="Bettencourt B.R."/>
            <person name="Celniker S.E."/>
            <person name="de Grey A.D.N.J."/>
            <person name="Drysdale R.A."/>
            <person name="Harris N.L."/>
            <person name="Richter J."/>
            <person name="Russo S."/>
            <person name="Schroeder A.J."/>
            <person name="Shu S.Q."/>
            <person name="Stapleton M."/>
            <person name="Yamada C."/>
            <person name="Ashburner M."/>
            <person name="Gelbart W.M."/>
            <person name="Rubin G.M."/>
            <person name="Lewis S.E."/>
        </authorList>
    </citation>
    <scope>GENOME REANNOTATION</scope>
    <scope>ALTERNATIVE SPLICING</scope>
    <source>
        <strain>Berkeley</strain>
    </source>
</reference>
<reference key="4">
    <citation type="journal article" date="2000" name="Science">
        <title>A Drosophila complementary DNA resource.</title>
        <authorList>
            <person name="Rubin G.M."/>
            <person name="Hong L."/>
            <person name="Brokstein P."/>
            <person name="Evans-Holm M."/>
            <person name="Frise E."/>
            <person name="Stapleton M."/>
            <person name="Harvey D.A."/>
        </authorList>
    </citation>
    <scope>NUCLEOTIDE SEQUENCE [LARGE SCALE MRNA] (ISOFORM A)</scope>
    <source>
        <strain>Berkeley</strain>
        <tissue>Head</tissue>
    </source>
</reference>
<reference key="5">
    <citation type="submission" date="2003-01" db="EMBL/GenBank/DDBJ databases">
        <authorList>
            <person name="Stapleton M."/>
            <person name="Brokstein P."/>
            <person name="Hong L."/>
            <person name="Agbayani A."/>
            <person name="Carlson J.W."/>
            <person name="Champe M."/>
            <person name="Chavez C."/>
            <person name="Dorsett V."/>
            <person name="Dresnek D."/>
            <person name="Farfan D."/>
            <person name="Frise E."/>
            <person name="George R.A."/>
            <person name="Gonzalez M."/>
            <person name="Guarin H."/>
            <person name="Kronmiller B."/>
            <person name="Li P.W."/>
            <person name="Liao G."/>
            <person name="Miranda A."/>
            <person name="Mungall C.J."/>
            <person name="Nunoo J."/>
            <person name="Pacleb J.M."/>
            <person name="Paragas V."/>
            <person name="Park S."/>
            <person name="Patel S."/>
            <person name="Phouanenavong S."/>
            <person name="Wan K.H."/>
            <person name="Yu C."/>
            <person name="Lewis S.E."/>
            <person name="Rubin G.M."/>
            <person name="Celniker S.E."/>
        </authorList>
    </citation>
    <scope>NUCLEOTIDE SEQUENCE [LARGE SCALE MRNA] (ISOFORM A)</scope>
    <source>
        <strain>Berkeley</strain>
        <tissue>Head</tissue>
    </source>
</reference>
<reference key="6">
    <citation type="journal article" date="2015" name="Cell Host Microbe">
        <title>Bacterial uracil modulates Drosophila DUOX-dependent gut immunity via Hedgehog-induced signaling endosomes.</title>
        <authorList>
            <person name="Lee K.A."/>
            <person name="Kim B."/>
            <person name="Bhin J."/>
            <person name="Kim D.H."/>
            <person name="You H."/>
            <person name="Kim E.K."/>
            <person name="Kim S.H."/>
            <person name="Ryu J.H."/>
            <person name="Hwang D."/>
            <person name="Lee W.J."/>
        </authorList>
    </citation>
    <scope>FUNCTION</scope>
</reference>
<reference key="7">
    <citation type="journal article" date="2001" name="EMBO J.">
        <title>Functional relevance of the disulfide-linked complex of the N-terminal PDZ domain of InaD with NorpA.</title>
        <authorList>
            <person name="Kimple M.E."/>
            <person name="Siderovski D.P."/>
            <person name="Sondek J."/>
        </authorList>
    </citation>
    <scope>X-RAY CRYSTALLOGRAPHY (1.8 ANGSTROMS) OF 1089-1095 IN A COMPLEX WITH INAD</scope>
</reference>
<evidence type="ECO:0000250" key="1"/>
<evidence type="ECO:0000250" key="2">
    <source>
        <dbReference type="UniProtKB" id="Q9P212"/>
    </source>
</evidence>
<evidence type="ECO:0000255" key="3">
    <source>
        <dbReference type="PROSITE-ProRule" id="PRU00041"/>
    </source>
</evidence>
<evidence type="ECO:0000255" key="4">
    <source>
        <dbReference type="PROSITE-ProRule" id="PRU00270"/>
    </source>
</evidence>
<evidence type="ECO:0000255" key="5">
    <source>
        <dbReference type="PROSITE-ProRule" id="PRU00271"/>
    </source>
</evidence>
<evidence type="ECO:0000256" key="6">
    <source>
        <dbReference type="SAM" id="MobiDB-lite"/>
    </source>
</evidence>
<evidence type="ECO:0000269" key="7">
    <source>
    </source>
</evidence>
<evidence type="ECO:0000269" key="8">
    <source>
    </source>
</evidence>
<evidence type="ECO:0000269" key="9">
    <source>
    </source>
</evidence>
<evidence type="ECO:0000303" key="10">
    <source>
    </source>
</evidence>
<evidence type="ECO:0000303" key="11">
    <source>
    </source>
</evidence>
<evidence type="ECO:0000305" key="12"/>
<evidence type="ECO:0000305" key="13">
    <source>
    </source>
</evidence>
<evidence type="ECO:0000312" key="14">
    <source>
        <dbReference type="FlyBase" id="FBgn0262738"/>
    </source>
</evidence>
<evidence type="ECO:0007829" key="15">
    <source>
        <dbReference type="PDB" id="6IRB"/>
    </source>
</evidence>
<evidence type="ECO:0007829" key="16">
    <source>
        <dbReference type="PDB" id="6IRE"/>
    </source>
</evidence>
<protein>
    <recommendedName>
        <fullName evidence="12">1-phosphatidylinositol 4,5-bisphosphate phosphodiesterase</fullName>
        <ecNumber evidence="2">3.1.4.11</ecNumber>
    </recommendedName>
    <alternativeName>
        <fullName evidence="11 14">1-phosphatidylinositol 4,5-bisphosphate phosphodiesterase beta</fullName>
    </alternativeName>
    <alternativeName>
        <fullName evidence="10">No receptor potential A protein</fullName>
    </alternativeName>
    <alternativeName>
        <fullName evidence="12">Phosphoinositide phospholipase C</fullName>
    </alternativeName>
    <alternativeName>
        <fullName evidence="12">Phosphoinositide phospholipase C-beta</fullName>
    </alternativeName>
</protein>
<accession>P13217</accession>
<accession>A4V3Y2</accession>
<accession>Q59E70</accession>
<accession>Q86P93</accession>
<accession>Q9U4G4</accession>
<accession>Q9W4K9</accession>
<organism>
    <name type="scientific">Drosophila melanogaster</name>
    <name type="common">Fruit fly</name>
    <dbReference type="NCBI Taxonomy" id="7227"/>
    <lineage>
        <taxon>Eukaryota</taxon>
        <taxon>Metazoa</taxon>
        <taxon>Ecdysozoa</taxon>
        <taxon>Arthropoda</taxon>
        <taxon>Hexapoda</taxon>
        <taxon>Insecta</taxon>
        <taxon>Pterygota</taxon>
        <taxon>Neoptera</taxon>
        <taxon>Endopterygota</taxon>
        <taxon>Diptera</taxon>
        <taxon>Brachycera</taxon>
        <taxon>Muscomorpha</taxon>
        <taxon>Ephydroidea</taxon>
        <taxon>Drosophilidae</taxon>
        <taxon>Drosophila</taxon>
        <taxon>Sophophora</taxon>
    </lineage>
</organism>
<keyword id="KW-0002">3D-structure</keyword>
<keyword id="KW-0025">Alternative splicing</keyword>
<keyword id="KW-0378">Hydrolase</keyword>
<keyword id="KW-0442">Lipid degradation</keyword>
<keyword id="KW-0443">Lipid metabolism</keyword>
<keyword id="KW-1185">Reference proteome</keyword>
<keyword id="KW-0716">Sensory transduction</keyword>
<keyword id="KW-0807">Transducer</keyword>
<keyword id="KW-0844">Vision</keyword>
<proteinExistence type="evidence at protein level"/>
<gene>
    <name evidence="14" type="primary">norpA</name>
    <name evidence="11 14" type="synonym">PLC-beta</name>
    <name evidence="14" type="ORF">CG3620</name>
</gene>
<dbReference type="EC" id="3.1.4.11" evidence="2"/>
<dbReference type="EMBL" id="J03138">
    <property type="protein sequence ID" value="AAA28724.1"/>
    <property type="molecule type" value="mRNA"/>
</dbReference>
<dbReference type="EMBL" id="AE014298">
    <property type="protein sequence ID" value="AAF45942.2"/>
    <property type="molecule type" value="Genomic_DNA"/>
</dbReference>
<dbReference type="EMBL" id="AE014298">
    <property type="protein sequence ID" value="AAN09121.1"/>
    <property type="molecule type" value="Genomic_DNA"/>
</dbReference>
<dbReference type="EMBL" id="AE014298">
    <property type="protein sequence ID" value="AAX52474.1"/>
    <property type="molecule type" value="Genomic_DNA"/>
</dbReference>
<dbReference type="EMBL" id="AE014298">
    <property type="protein sequence ID" value="AAX52475.1"/>
    <property type="molecule type" value="Genomic_DNA"/>
</dbReference>
<dbReference type="EMBL" id="AF181641">
    <property type="protein sequence ID" value="AAD55427.1"/>
    <property type="molecule type" value="mRNA"/>
</dbReference>
<dbReference type="EMBL" id="BT003293">
    <property type="protein sequence ID" value="AAO25053.1"/>
    <property type="molecule type" value="mRNA"/>
</dbReference>
<dbReference type="PIR" id="A31225">
    <property type="entry name" value="A31225"/>
</dbReference>
<dbReference type="RefSeq" id="NP_001014720.1">
    <molecule id="P13217-2"/>
    <property type="nucleotide sequence ID" value="NM_001014720.2"/>
</dbReference>
<dbReference type="RefSeq" id="NP_001014721.1">
    <molecule id="P13217-2"/>
    <property type="nucleotide sequence ID" value="NM_001014721.3"/>
</dbReference>
<dbReference type="RefSeq" id="NP_001162661.1">
    <molecule id="P13217-1"/>
    <property type="nucleotide sequence ID" value="NM_001169190.2"/>
</dbReference>
<dbReference type="RefSeq" id="NP_001284860.1">
    <molecule id="P13217-2"/>
    <property type="nucleotide sequence ID" value="NM_001297931.1"/>
</dbReference>
<dbReference type="RefSeq" id="NP_525069.2">
    <molecule id="P13217-1"/>
    <property type="nucleotide sequence ID" value="NM_080330.4"/>
</dbReference>
<dbReference type="RefSeq" id="NP_726925.1">
    <molecule id="P13217-1"/>
    <property type="nucleotide sequence ID" value="NM_167008.2"/>
</dbReference>
<dbReference type="PDB" id="1IHJ">
    <property type="method" value="X-ray"/>
    <property type="resolution" value="1.80 A"/>
    <property type="chains" value="A/B=211-214"/>
</dbReference>
<dbReference type="PDB" id="6IRB">
    <property type="method" value="X-ray"/>
    <property type="resolution" value="2.66 A"/>
    <property type="chains" value="A/B=863-1074"/>
</dbReference>
<dbReference type="PDB" id="6IRC">
    <property type="method" value="X-ray"/>
    <property type="resolution" value="3.54 A"/>
    <property type="chains" value="A=863-1095"/>
</dbReference>
<dbReference type="PDB" id="6IRE">
    <property type="method" value="X-ray"/>
    <property type="resolution" value="3.25 A"/>
    <property type="chains" value="A=863-1095"/>
</dbReference>
<dbReference type="PDBsum" id="1IHJ"/>
<dbReference type="PDBsum" id="6IRB"/>
<dbReference type="PDBsum" id="6IRC"/>
<dbReference type="PDBsum" id="6IRE"/>
<dbReference type="SMR" id="P13217"/>
<dbReference type="BioGRID" id="57893">
    <property type="interactions" value="34"/>
</dbReference>
<dbReference type="DIP" id="DIP-45N"/>
<dbReference type="FunCoup" id="P13217">
    <property type="interactions" value="338"/>
</dbReference>
<dbReference type="IntAct" id="P13217">
    <property type="interactions" value="8"/>
</dbReference>
<dbReference type="MINT" id="P13217"/>
<dbReference type="STRING" id="7227.FBpp0290690"/>
<dbReference type="PaxDb" id="7227-FBpp0070618"/>
<dbReference type="EnsemblMetazoa" id="FBtr0070650">
    <molecule id="P13217-1"/>
    <property type="protein sequence ID" value="FBpp0070618"/>
    <property type="gene ID" value="FBgn0262738"/>
</dbReference>
<dbReference type="EnsemblMetazoa" id="FBtr0070651">
    <molecule id="P13217-1"/>
    <property type="protein sequence ID" value="FBpp0070619"/>
    <property type="gene ID" value="FBgn0262738"/>
</dbReference>
<dbReference type="EnsemblMetazoa" id="FBtr0100670">
    <molecule id="P13217-2"/>
    <property type="protein sequence ID" value="FBpp0100136"/>
    <property type="gene ID" value="FBgn0262738"/>
</dbReference>
<dbReference type="EnsemblMetazoa" id="FBtr0100671">
    <molecule id="P13217-2"/>
    <property type="protein sequence ID" value="FBpp0100137"/>
    <property type="gene ID" value="FBgn0262738"/>
</dbReference>
<dbReference type="EnsemblMetazoa" id="FBtr0301475">
    <molecule id="P13217-1"/>
    <property type="protein sequence ID" value="FBpp0290690"/>
    <property type="gene ID" value="FBgn0262738"/>
</dbReference>
<dbReference type="EnsemblMetazoa" id="FBtr0343599">
    <molecule id="P13217-2"/>
    <property type="protein sequence ID" value="FBpp0310196"/>
    <property type="gene ID" value="FBgn0262738"/>
</dbReference>
<dbReference type="GeneID" id="31376"/>
<dbReference type="KEGG" id="dme:Dmel_CG3620"/>
<dbReference type="AGR" id="FB:FBgn0262738"/>
<dbReference type="CTD" id="31376"/>
<dbReference type="FlyBase" id="FBgn0262738">
    <property type="gene designation" value="norpA"/>
</dbReference>
<dbReference type="VEuPathDB" id="VectorBase:FBgn0262738"/>
<dbReference type="eggNOG" id="KOG1265">
    <property type="taxonomic scope" value="Eukaryota"/>
</dbReference>
<dbReference type="GeneTree" id="ENSGT00940000156426"/>
<dbReference type="InParanoid" id="P13217"/>
<dbReference type="OMA" id="TQLMKHW"/>
<dbReference type="OrthoDB" id="269822at2759"/>
<dbReference type="PhylomeDB" id="P13217"/>
<dbReference type="Reactome" id="R-DME-112043">
    <property type="pathway name" value="PLC beta mediated events"/>
</dbReference>
<dbReference type="Reactome" id="R-DME-1855204">
    <property type="pathway name" value="Synthesis of IP3 and IP4 in the cytosol"/>
</dbReference>
<dbReference type="Reactome" id="R-DME-416476">
    <property type="pathway name" value="G alpha (q) signalling events"/>
</dbReference>
<dbReference type="BioGRID-ORCS" id="31376">
    <property type="hits" value="0 hits in 3 CRISPR screens"/>
</dbReference>
<dbReference type="ChiTaRS" id="norpA">
    <property type="organism name" value="fly"/>
</dbReference>
<dbReference type="GenomeRNAi" id="31376"/>
<dbReference type="PRO" id="PR:P13217"/>
<dbReference type="Proteomes" id="UP000000803">
    <property type="component" value="Chromosome X"/>
</dbReference>
<dbReference type="Bgee" id="FBgn0262738">
    <property type="expression patterns" value="Expressed in outer photoreceptor cell (Drosophila) in insect head and 292 other cell types or tissues"/>
</dbReference>
<dbReference type="ExpressionAtlas" id="P13217">
    <property type="expression patterns" value="baseline and differential"/>
</dbReference>
<dbReference type="GO" id="GO:0016027">
    <property type="term" value="C:inaD signaling complex"/>
    <property type="evidence" value="ECO:0000353"/>
    <property type="project" value="FlyBase"/>
</dbReference>
<dbReference type="GO" id="GO:0016028">
    <property type="term" value="C:rhabdomere"/>
    <property type="evidence" value="ECO:0000314"/>
    <property type="project" value="FlyBase"/>
</dbReference>
<dbReference type="GO" id="GO:0005509">
    <property type="term" value="F:calcium ion binding"/>
    <property type="evidence" value="ECO:0007669"/>
    <property type="project" value="InterPro"/>
</dbReference>
<dbReference type="GO" id="GO:0005096">
    <property type="term" value="F:GTPase activator activity"/>
    <property type="evidence" value="ECO:0000315"/>
    <property type="project" value="FlyBase"/>
</dbReference>
<dbReference type="GO" id="GO:0004435">
    <property type="term" value="F:phosphatidylinositol-4,5-bisphosphate phospholipase C activity"/>
    <property type="evidence" value="ECO:0000315"/>
    <property type="project" value="FlyBase"/>
</dbReference>
<dbReference type="GO" id="GO:0004629">
    <property type="term" value="F:phospholipase C activity"/>
    <property type="evidence" value="ECO:0000304"/>
    <property type="project" value="FlyBase"/>
</dbReference>
<dbReference type="GO" id="GO:0008344">
    <property type="term" value="P:adult locomotory behavior"/>
    <property type="evidence" value="ECO:0000315"/>
    <property type="project" value="FlyBase"/>
</dbReference>
<dbReference type="GO" id="GO:0019722">
    <property type="term" value="P:calcium-mediated signaling"/>
    <property type="evidence" value="ECO:0000304"/>
    <property type="project" value="FlyBase"/>
</dbReference>
<dbReference type="GO" id="GO:0071482">
    <property type="term" value="P:cellular response to light stimulus"/>
    <property type="evidence" value="ECO:0000315"/>
    <property type="project" value="FlyBase"/>
</dbReference>
<dbReference type="GO" id="GO:0007623">
    <property type="term" value="P:circadian rhythm"/>
    <property type="evidence" value="ECO:0000316"/>
    <property type="project" value="FlyBase"/>
</dbReference>
<dbReference type="GO" id="GO:0001580">
    <property type="term" value="P:detection of chemical stimulus involved in sensory perception of bitter taste"/>
    <property type="evidence" value="ECO:0000315"/>
    <property type="project" value="FlyBase"/>
</dbReference>
<dbReference type="GO" id="GO:0006651">
    <property type="term" value="P:diacylglycerol biosynthetic process"/>
    <property type="evidence" value="ECO:0000304"/>
    <property type="project" value="FlyBase"/>
</dbReference>
<dbReference type="GO" id="GO:0009649">
    <property type="term" value="P:entrainment of circadian clock"/>
    <property type="evidence" value="ECO:0000315"/>
    <property type="project" value="FlyBase"/>
</dbReference>
<dbReference type="GO" id="GO:0043153">
    <property type="term" value="P:entrainment of circadian clock by photoperiod"/>
    <property type="evidence" value="ECO:0000316"/>
    <property type="project" value="FlyBase"/>
</dbReference>
<dbReference type="GO" id="GO:0016042">
    <property type="term" value="P:lipid catabolic process"/>
    <property type="evidence" value="ECO:0007669"/>
    <property type="project" value="UniProtKB-KW"/>
</dbReference>
<dbReference type="GO" id="GO:0002385">
    <property type="term" value="P:mucosal immune response"/>
    <property type="evidence" value="ECO:0000315"/>
    <property type="project" value="FlyBase"/>
</dbReference>
<dbReference type="GO" id="GO:0046673">
    <property type="term" value="P:negative regulation of compound eye retinal cell programmed cell death"/>
    <property type="evidence" value="ECO:0000315"/>
    <property type="project" value="FlyBase"/>
</dbReference>
<dbReference type="GO" id="GO:0046488">
    <property type="term" value="P:phosphatidylinositol metabolic process"/>
    <property type="evidence" value="ECO:0000315"/>
    <property type="project" value="FlyBase"/>
</dbReference>
<dbReference type="GO" id="GO:0048015">
    <property type="term" value="P:phosphatidylinositol-mediated signaling"/>
    <property type="evidence" value="ECO:0000318"/>
    <property type="project" value="GO_Central"/>
</dbReference>
<dbReference type="GO" id="GO:0007200">
    <property type="term" value="P:phospholipase C-activating G protein-coupled receptor signaling pathway"/>
    <property type="evidence" value="ECO:0000304"/>
    <property type="project" value="FlyBase"/>
</dbReference>
<dbReference type="GO" id="GO:0030265">
    <property type="term" value="P:phospholipase C-activating opsin-mediated signaling pathway"/>
    <property type="evidence" value="ECO:0000315"/>
    <property type="project" value="FlyBase"/>
</dbReference>
<dbReference type="GO" id="GO:0008654">
    <property type="term" value="P:phospholipid biosynthetic process"/>
    <property type="evidence" value="ECO:0000304"/>
    <property type="project" value="FlyBase"/>
</dbReference>
<dbReference type="GO" id="GO:0006644">
    <property type="term" value="P:phospholipid metabolic process"/>
    <property type="evidence" value="ECO:0000304"/>
    <property type="project" value="FlyBase"/>
</dbReference>
<dbReference type="GO" id="GO:0045494">
    <property type="term" value="P:photoreceptor cell maintenance"/>
    <property type="evidence" value="ECO:0000315"/>
    <property type="project" value="FlyBase"/>
</dbReference>
<dbReference type="GO" id="GO:0007602">
    <property type="term" value="P:phototransduction"/>
    <property type="evidence" value="ECO:0000315"/>
    <property type="project" value="FlyBase"/>
</dbReference>
<dbReference type="GO" id="GO:2000370">
    <property type="term" value="P:positive regulation of clathrin-dependent endocytosis"/>
    <property type="evidence" value="ECO:0000315"/>
    <property type="project" value="FlyBase"/>
</dbReference>
<dbReference type="GO" id="GO:0051209">
    <property type="term" value="P:release of sequestered calcium ion into cytosol"/>
    <property type="evidence" value="ECO:0000318"/>
    <property type="project" value="GO_Central"/>
</dbReference>
<dbReference type="GO" id="GO:0043052">
    <property type="term" value="P:thermotaxis"/>
    <property type="evidence" value="ECO:0000315"/>
    <property type="project" value="FlyBase"/>
</dbReference>
<dbReference type="GO" id="GO:0007601">
    <property type="term" value="P:visual perception"/>
    <property type="evidence" value="ECO:0007669"/>
    <property type="project" value="UniProtKB-KW"/>
</dbReference>
<dbReference type="CDD" id="cd00275">
    <property type="entry name" value="C2_PLC_like"/>
    <property type="match status" value="1"/>
</dbReference>
<dbReference type="CDD" id="cd16212">
    <property type="entry name" value="EFh_NorpA_like"/>
    <property type="match status" value="1"/>
</dbReference>
<dbReference type="CDD" id="cd13361">
    <property type="entry name" value="PH_PLC_beta"/>
    <property type="match status" value="1"/>
</dbReference>
<dbReference type="CDD" id="cd08591">
    <property type="entry name" value="PI-PLCc_beta"/>
    <property type="match status" value="1"/>
</dbReference>
<dbReference type="FunFam" id="1.10.238.10:FF:000024">
    <property type="entry name" value="1-phosphatidylinositol 4,5-bisphosphate phosphodiesterase"/>
    <property type="match status" value="1"/>
</dbReference>
<dbReference type="FunFam" id="1.20.1230.10:FF:000005">
    <property type="entry name" value="1-phosphatidylinositol 4,5-bisphosphate phosphodiesterase"/>
    <property type="match status" value="1"/>
</dbReference>
<dbReference type="FunFam" id="2.30.29.240:FF:000001">
    <property type="entry name" value="1-phosphatidylinositol 4,5-bisphosphate phosphodiesterase"/>
    <property type="match status" value="1"/>
</dbReference>
<dbReference type="FunFam" id="2.60.40.150:FF:000008">
    <property type="entry name" value="1-phosphatidylinositol 4,5-bisphosphate phosphodiesterase"/>
    <property type="match status" value="1"/>
</dbReference>
<dbReference type="Gene3D" id="2.30.29.240">
    <property type="match status" value="1"/>
</dbReference>
<dbReference type="Gene3D" id="2.60.40.150">
    <property type="entry name" value="C2 domain"/>
    <property type="match status" value="1"/>
</dbReference>
<dbReference type="Gene3D" id="1.10.238.10">
    <property type="entry name" value="EF-hand"/>
    <property type="match status" value="1"/>
</dbReference>
<dbReference type="Gene3D" id="3.20.20.190">
    <property type="entry name" value="Phosphatidylinositol (PI) phosphodiesterase"/>
    <property type="match status" value="1"/>
</dbReference>
<dbReference type="Gene3D" id="1.20.1230.10">
    <property type="entry name" value="Phospholipase C beta, distal C-terminal domain"/>
    <property type="match status" value="1"/>
</dbReference>
<dbReference type="InterPro" id="IPR000008">
    <property type="entry name" value="C2_dom"/>
</dbReference>
<dbReference type="InterPro" id="IPR035892">
    <property type="entry name" value="C2_domain_sf"/>
</dbReference>
<dbReference type="InterPro" id="IPR011992">
    <property type="entry name" value="EF-hand-dom_pair"/>
</dbReference>
<dbReference type="InterPro" id="IPR001192">
    <property type="entry name" value="PI-PLC_fam"/>
</dbReference>
<dbReference type="InterPro" id="IPR016280">
    <property type="entry name" value="PLC-beta"/>
</dbReference>
<dbReference type="InterPro" id="IPR042531">
    <property type="entry name" value="PLC-beta_C_sf"/>
</dbReference>
<dbReference type="InterPro" id="IPR037862">
    <property type="entry name" value="PLC-beta_PH"/>
</dbReference>
<dbReference type="InterPro" id="IPR017946">
    <property type="entry name" value="PLC-like_Pdiesterase_TIM-brl"/>
</dbReference>
<dbReference type="InterPro" id="IPR053945">
    <property type="entry name" value="PLCB1-4-like_EFh"/>
</dbReference>
<dbReference type="InterPro" id="IPR000909">
    <property type="entry name" value="PLipase_C_PInositol-sp_X_dom"/>
</dbReference>
<dbReference type="InterPro" id="IPR001711">
    <property type="entry name" value="PLipase_C_Pinositol-sp_Y"/>
</dbReference>
<dbReference type="PANTHER" id="PTHR10336:SF36">
    <property type="entry name" value="1-PHOSPHATIDYLINOSITOL 4,5-BISPHOSPHATE PHOSPHODIESTERASE BETA-4"/>
    <property type="match status" value="1"/>
</dbReference>
<dbReference type="PANTHER" id="PTHR10336">
    <property type="entry name" value="PHOSPHOINOSITIDE-SPECIFIC PHOSPHOLIPASE C FAMILY PROTEIN"/>
    <property type="match status" value="1"/>
</dbReference>
<dbReference type="Pfam" id="PF00168">
    <property type="entry name" value="C2"/>
    <property type="match status" value="1"/>
</dbReference>
<dbReference type="Pfam" id="PF17787">
    <property type="entry name" value="PH_14"/>
    <property type="match status" value="1"/>
</dbReference>
<dbReference type="Pfam" id="PF00388">
    <property type="entry name" value="PI-PLC-X"/>
    <property type="match status" value="1"/>
</dbReference>
<dbReference type="Pfam" id="PF00387">
    <property type="entry name" value="PI-PLC-Y"/>
    <property type="match status" value="1"/>
</dbReference>
<dbReference type="Pfam" id="PF22631">
    <property type="entry name" value="PLCB1-4-like_EFh"/>
    <property type="match status" value="1"/>
</dbReference>
<dbReference type="PIRSF" id="PIRSF000956">
    <property type="entry name" value="PLC-beta"/>
    <property type="match status" value="1"/>
</dbReference>
<dbReference type="PRINTS" id="PR00390">
    <property type="entry name" value="PHPHLIPASEC"/>
</dbReference>
<dbReference type="SMART" id="SM00239">
    <property type="entry name" value="C2"/>
    <property type="match status" value="1"/>
</dbReference>
<dbReference type="SMART" id="SM00148">
    <property type="entry name" value="PLCXc"/>
    <property type="match status" value="1"/>
</dbReference>
<dbReference type="SMART" id="SM00149">
    <property type="entry name" value="PLCYc"/>
    <property type="match status" value="1"/>
</dbReference>
<dbReference type="SUPFAM" id="SSF69989">
    <property type="entry name" value="C-terminal domain of PLC-beta"/>
    <property type="match status" value="1"/>
</dbReference>
<dbReference type="SUPFAM" id="SSF49562">
    <property type="entry name" value="C2 domain (Calcium/lipid-binding domain, CaLB)"/>
    <property type="match status" value="1"/>
</dbReference>
<dbReference type="SUPFAM" id="SSF47473">
    <property type="entry name" value="EF-hand"/>
    <property type="match status" value="1"/>
</dbReference>
<dbReference type="SUPFAM" id="SSF50729">
    <property type="entry name" value="PH domain-like"/>
    <property type="match status" value="1"/>
</dbReference>
<dbReference type="SUPFAM" id="SSF51695">
    <property type="entry name" value="PLC-like phosphodiesterases"/>
    <property type="match status" value="1"/>
</dbReference>
<dbReference type="PROSITE" id="PS50004">
    <property type="entry name" value="C2"/>
    <property type="match status" value="1"/>
</dbReference>
<dbReference type="PROSITE" id="PS50007">
    <property type="entry name" value="PIPLC_X_DOMAIN"/>
    <property type="match status" value="1"/>
</dbReference>
<dbReference type="PROSITE" id="PS50008">
    <property type="entry name" value="PIPLC_Y_DOMAIN"/>
    <property type="match status" value="1"/>
</dbReference>
<comment type="function">
    <text evidence="2 8 9">The production of the second messenger molecules diacylglycerol (DAG) and inositol 1,4,5-trisphosphate (IP3) is mediated by activated phosphatidylinositol-specific phospholipase C enzymes (By similarity). Essential component of the phototransduction pathway (PubMed:2457447). Essential downstream component of a hh-signaling pathway which regulates the Duox-dependent gut immune response to bacterial uracil; required for the activation of Cad99C and consequently Cad99C-dependent endosome formation, which is essential for the Duox-dependent production of reactive oxygen species (ROS) in response to intestinal bacterial infection (PubMed:25639794).</text>
</comment>
<comment type="catalytic activity">
    <reaction evidence="2">
        <text>a 1,2-diacyl-sn-glycero-3-phospho-(1D-myo-inositol-4,5-bisphosphate) + H2O = 1D-myo-inositol 1,4,5-trisphosphate + a 1,2-diacyl-sn-glycerol + H(+)</text>
        <dbReference type="Rhea" id="RHEA:33179"/>
        <dbReference type="ChEBI" id="CHEBI:15377"/>
        <dbReference type="ChEBI" id="CHEBI:15378"/>
        <dbReference type="ChEBI" id="CHEBI:17815"/>
        <dbReference type="ChEBI" id="CHEBI:58456"/>
        <dbReference type="ChEBI" id="CHEBI:203600"/>
        <dbReference type="EC" id="3.1.4.11"/>
    </reaction>
</comment>
<comment type="subunit">
    <text evidence="7">Interacts with inaD.</text>
</comment>
<comment type="interaction">
    <interactant intactId="EBI-101510">
        <id>P13217</id>
    </interactant>
    <interactant intactId="EBI-195326">
        <id>Q24008</id>
        <label>inaD</label>
    </interactant>
    <organismsDiffer>false</organismsDiffer>
    <experiments>4</experiments>
</comment>
<comment type="alternative products">
    <event type="alternative splicing"/>
    <isoform>
        <id>P13217-1</id>
        <name>A</name>
        <name>B</name>
        <sequence type="displayed"/>
    </isoform>
    <isoform>
        <id>P13217-2</id>
        <name>C</name>
        <name>D</name>
        <sequence type="described" ref="VSP_034088"/>
    </isoform>
</comment>
<comment type="tissue specificity">
    <text evidence="8">Abundantly expressed in the adult retina.</text>
</comment>
<comment type="disruption phenotype">
    <text evidence="8">Flies have no photoreceptor potential, their eyes lack phospholipase C (PLC) activity and they are completely blind.</text>
</comment>
<comment type="caution">
    <text evidence="13">3D structural studies were performed with a synthetic heptapeptide that contained Cys, corresponding to position 1094, therefore the detected disulfide bridge is an artifact.</text>
</comment>
<name>PIPA_DROME</name>
<feature type="chain" id="PRO_0000088510" description="1-phosphatidylinositol 4,5-bisphosphate phosphodiesterase">
    <location>
        <begin position="1"/>
        <end position="1095"/>
    </location>
</feature>
<feature type="domain" description="PI-PLC X-box" evidence="4">
    <location>
        <begin position="319"/>
        <end position="469"/>
    </location>
</feature>
<feature type="domain" description="PI-PLC Y-box" evidence="5">
    <location>
        <begin position="550"/>
        <end position="666"/>
    </location>
</feature>
<feature type="domain" description="C2" evidence="3">
    <location>
        <begin position="666"/>
        <end position="794"/>
    </location>
</feature>
<feature type="region of interest" description="Disordered" evidence="6">
    <location>
        <begin position="487"/>
        <end position="529"/>
    </location>
</feature>
<feature type="region of interest" description="Disordered" evidence="6">
    <location>
        <begin position="842"/>
        <end position="863"/>
    </location>
</feature>
<feature type="region of interest" description="Disordered" evidence="6">
    <location>
        <begin position="1000"/>
        <end position="1030"/>
    </location>
</feature>
<feature type="compositionally biased region" description="Low complexity" evidence="6">
    <location>
        <begin position="500"/>
        <end position="523"/>
    </location>
</feature>
<feature type="compositionally biased region" description="Basic and acidic residues" evidence="6">
    <location>
        <begin position="852"/>
        <end position="863"/>
    </location>
</feature>
<feature type="compositionally biased region" description="Basic and acidic residues" evidence="6">
    <location>
        <begin position="1007"/>
        <end position="1030"/>
    </location>
</feature>
<feature type="active site" evidence="4">
    <location>
        <position position="334"/>
    </location>
</feature>
<feature type="active site" evidence="4">
    <location>
        <position position="381"/>
    </location>
</feature>
<feature type="binding site" evidence="1">
    <location>
        <position position="467"/>
    </location>
    <ligand>
        <name>substrate</name>
    </ligand>
</feature>
<feature type="binding site" evidence="1">
    <location>
        <position position="469"/>
    </location>
    <ligand>
        <name>substrate</name>
    </ligand>
</feature>
<feature type="binding site" evidence="1">
    <location>
        <position position="579"/>
    </location>
    <ligand>
        <name>substrate</name>
    </ligand>
</feature>
<feature type="binding site" evidence="1">
    <location>
        <position position="606"/>
    </location>
    <ligand>
        <name>substrate</name>
    </ligand>
</feature>
<feature type="splice variant" id="VSP_034088" description="In isoform C." evidence="12">
    <original>SWQKNLRLITHNNRATNVCPRVNLM</original>
    <variation>IWLDGIRKITHNVKANNICPMMCLR</variation>
    <location>
        <begin position="130"/>
        <end position="154"/>
    </location>
</feature>
<feature type="sequence conflict" description="In Ref. 1; AAA28724." evidence="12" ref="1">
    <original>H</original>
    <variation>R</variation>
    <location>
        <position position="446"/>
    </location>
</feature>
<feature type="sequence conflict" description="In Ref. 5; AAO25053." evidence="12" ref="5">
    <original>D</original>
    <variation>G</variation>
    <location>
        <position position="968"/>
    </location>
</feature>
<feature type="sequence conflict" description="In Ref. 1; AAA28724." evidence="12" ref="1">
    <original>Y</original>
    <variation>C</variation>
    <location>
        <position position="1094"/>
    </location>
</feature>
<feature type="helix" evidence="15">
    <location>
        <begin position="873"/>
        <end position="877"/>
    </location>
</feature>
<feature type="helix" evidence="15">
    <location>
        <begin position="880"/>
        <end position="1012"/>
    </location>
</feature>
<feature type="helix" evidence="15">
    <location>
        <begin position="1020"/>
        <end position="1073"/>
    </location>
</feature>
<feature type="turn" evidence="16">
    <location>
        <begin position="1086"/>
        <end position="1088"/>
    </location>
</feature>
<feature type="helix" evidence="16">
    <location>
        <begin position="1089"/>
        <end position="1091"/>
    </location>
</feature>
<feature type="strand" evidence="16">
    <location>
        <begin position="1093"/>
        <end position="1095"/>
    </location>
</feature>
<sequence>MTKKYEFDWIIPVPPELTTGCVFDRWFENEKETKENDFERDALFKVDEYGFFLYWKSEGRDGDVIELCQVSDIRAGGTPKDPKILDKVTKKNGTNIPELDKRSLTICSNTDYINITYHHVICPDAATAKSWQKNLRLITHNNRATNVCPRVNLMKHWMRLSYCVEKSGKIPVKTLAKTFASGKTEKLVYTCIKDAGLPDDKNATMTKEQFTFDKFYALYHKVCPRNDIEELFTSITKGKQDFISLEQFIQFMNDKQRDPRMNEILYPLYEEKRCTEIINDYELDEEKKKNVQMSLDGFKRYLMSDENAPVFLDRLDFYMEMDQPLAHYYINSSHNTYLSGRQIGGKSSVEMYRQTLLAGCRCVELDCWNGKGEDEEPIVTHGHAYCTEILFKDCIQAIADCAFVSSEYPVILSFENHCNRAQQYKLAKYCDDFFGDLLLKEPLPDHPLDPGLPLPPPCKLKRKILIKNKRMKPEVEKVELELWLKGELKTDDDPEEDASAGKPPEAAAAPAPAPEAAAAAEGAAEGGGGAEAEAAAANYSGSTTNVHPWLSSMVNYAQPIKFQGFDKAIEKNIAHNMSSFAESAGMNYLKQSSIDFVNYNKRQMSRIYPKGTRADSSNYMPQVFWNAGCQMVSLNFQSSDLPMQLNQGKFEYNGGCGYLLKPDFMRRADKDFDPFADAPVDGVIAAQCSVKVIAGQFLSDKKVGTYVEVDMFGLPSDTVKKEFRTRLVANNGLNPVYNEDPFVFRKVVLPDLAVLRFGVYEESGKILGQRILPLDGLQAGYRHVSLRTEANFPMSLPMLFVNIELKIYVPDGFEDFMAMLSDPRGFAGAAKQQNEQMKALGIEEQSGGAARDAGKAKEEEKKEPPLVFEPVTLESLRQEKGFQKVGKKQIKELDTLRKKHAKERTSVQKTQNAAIDKLIKGKSKDDIRNDANIKNSINDQTKQWTDMIARHRKEEWDMLRQHVQDSQDAMKALMLTVQAAQIKQLEDRHARDIKDLNAKQAKMSADTAKEVQNDKTLKTKNEKDRRLREKRQNNVKRFMEEKKQIGVKQGRAMEKLKLAHSKQIEEFSTDVQKLMDMYKIEEEAYKTQGKTEFYA</sequence>